<protein>
    <recommendedName>
        <fullName>Peroxisomal membrane protein PEX31</fullName>
    </recommendedName>
    <alternativeName>
        <fullName>Peroxin-31</fullName>
    </alternativeName>
</protein>
<organism>
    <name type="scientific">Saccharomyces cerevisiae (strain ATCC 204508 / S288c)</name>
    <name type="common">Baker's yeast</name>
    <dbReference type="NCBI Taxonomy" id="559292"/>
    <lineage>
        <taxon>Eukaryota</taxon>
        <taxon>Fungi</taxon>
        <taxon>Dikarya</taxon>
        <taxon>Ascomycota</taxon>
        <taxon>Saccharomycotina</taxon>
        <taxon>Saccharomycetes</taxon>
        <taxon>Saccharomycetales</taxon>
        <taxon>Saccharomycetaceae</taxon>
        <taxon>Saccharomyces</taxon>
    </lineage>
</organism>
<keyword id="KW-0472">Membrane</keyword>
<keyword id="KW-0576">Peroxisome</keyword>
<keyword id="KW-0597">Phosphoprotein</keyword>
<keyword id="KW-1185">Reference proteome</keyword>
<keyword id="KW-0812">Transmembrane</keyword>
<keyword id="KW-1133">Transmembrane helix</keyword>
<dbReference type="EMBL" id="Z72789">
    <property type="protein sequence ID" value="CAA96987.1"/>
    <property type="molecule type" value="Genomic_DNA"/>
</dbReference>
<dbReference type="EMBL" id="BK006941">
    <property type="protein sequence ID" value="DAA08102.1"/>
    <property type="molecule type" value="Genomic_DNA"/>
</dbReference>
<dbReference type="PIR" id="S64293">
    <property type="entry name" value="S64293"/>
</dbReference>
<dbReference type="RefSeq" id="NP_011518.1">
    <property type="nucleotide sequence ID" value="NM_001181133.1"/>
</dbReference>
<dbReference type="BioGRID" id="33248">
    <property type="interactions" value="103"/>
</dbReference>
<dbReference type="DIP" id="DIP-5455N"/>
<dbReference type="FunCoup" id="P53203">
    <property type="interactions" value="39"/>
</dbReference>
<dbReference type="IntAct" id="P53203">
    <property type="interactions" value="5"/>
</dbReference>
<dbReference type="MINT" id="P53203"/>
<dbReference type="STRING" id="4932.YGR004W"/>
<dbReference type="TCDB" id="3.A.20.1.5">
    <property type="family name" value="the peroxisomal protein importer (ppi) family"/>
</dbReference>
<dbReference type="iPTMnet" id="P53203"/>
<dbReference type="PaxDb" id="4932-YGR004W"/>
<dbReference type="PeptideAtlas" id="P53203"/>
<dbReference type="TopDownProteomics" id="P53203"/>
<dbReference type="EnsemblFungi" id="YGR004W_mRNA">
    <property type="protein sequence ID" value="YGR004W"/>
    <property type="gene ID" value="YGR004W"/>
</dbReference>
<dbReference type="GeneID" id="852887"/>
<dbReference type="KEGG" id="sce:YGR004W"/>
<dbReference type="AGR" id="SGD:S000003236"/>
<dbReference type="SGD" id="S000003236">
    <property type="gene designation" value="PEX31"/>
</dbReference>
<dbReference type="VEuPathDB" id="FungiDB:YGR004W"/>
<dbReference type="eggNOG" id="ENOG502QT80">
    <property type="taxonomic scope" value="Eukaryota"/>
</dbReference>
<dbReference type="GeneTree" id="ENSGT00940000176349"/>
<dbReference type="HOGENOM" id="CLU_016397_0_0_1"/>
<dbReference type="InParanoid" id="P53203"/>
<dbReference type="OMA" id="ASWTDEF"/>
<dbReference type="OrthoDB" id="5586090at2759"/>
<dbReference type="BioCyc" id="YEAST:G3O-30735-MONOMER"/>
<dbReference type="BioGRID-ORCS" id="852887">
    <property type="hits" value="1 hit in 10 CRISPR screens"/>
</dbReference>
<dbReference type="PRO" id="PR:P53203"/>
<dbReference type="Proteomes" id="UP000002311">
    <property type="component" value="Chromosome VII"/>
</dbReference>
<dbReference type="RNAct" id="P53203">
    <property type="molecule type" value="protein"/>
</dbReference>
<dbReference type="GO" id="GO:0071944">
    <property type="term" value="C:cell periphery"/>
    <property type="evidence" value="ECO:0007005"/>
    <property type="project" value="SGD"/>
</dbReference>
<dbReference type="GO" id="GO:0005783">
    <property type="term" value="C:endoplasmic reticulum"/>
    <property type="evidence" value="ECO:0007005"/>
    <property type="project" value="SGD"/>
</dbReference>
<dbReference type="GO" id="GO:0071782">
    <property type="term" value="C:endoplasmic reticulum tubular network"/>
    <property type="evidence" value="ECO:0000250"/>
    <property type="project" value="SGD"/>
</dbReference>
<dbReference type="GO" id="GO:0005778">
    <property type="term" value="C:peroxisomal membrane"/>
    <property type="evidence" value="ECO:0000314"/>
    <property type="project" value="SGD"/>
</dbReference>
<dbReference type="GO" id="GO:0007031">
    <property type="term" value="P:peroxisome organization"/>
    <property type="evidence" value="ECO:0000315"/>
    <property type="project" value="SGD"/>
</dbReference>
<dbReference type="GO" id="GO:1900063">
    <property type="term" value="P:regulation of peroxisome organization"/>
    <property type="evidence" value="ECO:0000316"/>
    <property type="project" value="SGD"/>
</dbReference>
<dbReference type="InterPro" id="IPR006614">
    <property type="entry name" value="Peroxin/Ferlin"/>
</dbReference>
<dbReference type="InterPro" id="IPR052646">
    <property type="entry name" value="Peroxisomal_PEX28-32"/>
</dbReference>
<dbReference type="InterPro" id="IPR010482">
    <property type="entry name" value="TECPR1-like_DysF"/>
</dbReference>
<dbReference type="PANTHER" id="PTHR31679">
    <property type="entry name" value="PEROXISOMAL MEMBRANE PROTEIN PEX30-RELATED"/>
    <property type="match status" value="1"/>
</dbReference>
<dbReference type="PANTHER" id="PTHR31679:SF2">
    <property type="entry name" value="PEROXISOMAL MEMBRANE PROTEIN PEX30-RELATED"/>
    <property type="match status" value="1"/>
</dbReference>
<dbReference type="Pfam" id="PF06398">
    <property type="entry name" value="Pex24p"/>
    <property type="match status" value="1"/>
</dbReference>
<dbReference type="SMART" id="SM00694">
    <property type="entry name" value="DysFC"/>
    <property type="match status" value="1"/>
</dbReference>
<dbReference type="SMART" id="SM00693">
    <property type="entry name" value="DysFN"/>
    <property type="match status" value="1"/>
</dbReference>
<sequence length="462" mass="52943">MSEINNENLEPTSSTVAESTESKNKHIRSALRKRRGKLSAQTYEEDQEAILSSPLLTSTPKTVSRSLVRLYPYLIVVDNFLSIITWSNDNVSANLLGIFLFTVCVLYFGFITRYFGHLMIVGIIWVYLLIDKHVQETMASCPSLDDIIHVMDRVSMKSSAVLSPITILSAQDVRRLLFTIAFLSPVYIFLTVFVLSPNYLMLIGGLYVLTYHSKLIRRMRRYLWKFRVVRLLVFFITGLDLGGPDNNRRLFASVNKKIRSFVWNEVGNTSNTKKTVLFKVALFENQRRWLGIGWTSTMLSYERASWTDEFLNTSPSPEVFTLPEEQSGMAWEWHDKDWMLDLTNDGIIQLPASAAKTKVKPGADEGFIYYDNTWNNPSATDTYKKYTRRRRWIRTATVTTTYDDEPTVEKATPNSHALKSEENNRVRKRKVSFSTANEVHIIPSSDSSKLIQISDVSMSPSL</sequence>
<evidence type="ECO:0000255" key="1"/>
<evidence type="ECO:0000256" key="2">
    <source>
        <dbReference type="SAM" id="MobiDB-lite"/>
    </source>
</evidence>
<evidence type="ECO:0000269" key="3">
    <source>
    </source>
</evidence>
<evidence type="ECO:0000269" key="4">
    <source>
    </source>
</evidence>
<evidence type="ECO:0000305" key="5"/>
<evidence type="ECO:0007744" key="6">
    <source>
    </source>
</evidence>
<evidence type="ECO:0007744" key="7">
    <source>
    </source>
</evidence>
<evidence type="ECO:0007744" key="8">
    <source>
    </source>
</evidence>
<gene>
    <name type="primary">PEX31</name>
    <name type="ordered locus">YGR004W</name>
</gene>
<name>PEX31_YEAST</name>
<feature type="chain" id="PRO_0000202779" description="Peroxisomal membrane protein PEX31">
    <location>
        <begin position="1"/>
        <end position="462"/>
    </location>
</feature>
<feature type="topological domain" description="Cytoplasmic" evidence="1">
    <location>
        <begin position="1"/>
        <end position="90"/>
    </location>
</feature>
<feature type="transmembrane region" description="Helical" evidence="1">
    <location>
        <begin position="91"/>
        <end position="111"/>
    </location>
</feature>
<feature type="topological domain" description="Peroxisomal" evidence="1">
    <location>
        <begin position="112"/>
        <end position="175"/>
    </location>
</feature>
<feature type="transmembrane region" description="Helical" evidence="1">
    <location>
        <begin position="176"/>
        <end position="196"/>
    </location>
</feature>
<feature type="topological domain" description="Cytoplasmic" evidence="1">
    <location>
        <begin position="197"/>
        <end position="462"/>
    </location>
</feature>
<feature type="region of interest" description="Disordered" evidence="2">
    <location>
        <begin position="1"/>
        <end position="26"/>
    </location>
</feature>
<feature type="region of interest" description="Disordered" evidence="2">
    <location>
        <begin position="406"/>
        <end position="425"/>
    </location>
</feature>
<feature type="compositionally biased region" description="Polar residues" evidence="2">
    <location>
        <begin position="1"/>
        <end position="19"/>
    </location>
</feature>
<feature type="modified residue" description="Phosphoserine" evidence="6 7 8">
    <location>
        <position position="432"/>
    </location>
</feature>
<feature type="modified residue" description="Phosphothreonine" evidence="8">
    <location>
        <position position="435"/>
    </location>
</feature>
<comment type="interaction">
    <interactant intactId="EBI-23069">
        <id>P53203</id>
    </interactant>
    <interactant intactId="EBI-13715">
        <id>P32598</id>
        <label>GLC7</label>
    </interactant>
    <organismsDiffer>false</organismsDiffer>
    <experiments>2</experiments>
</comment>
<comment type="subcellular location">
    <subcellularLocation>
        <location evidence="3">Peroxisome membrane</location>
        <topology evidence="3">Multi-pass membrane protein</topology>
    </subcellularLocation>
</comment>
<comment type="miscellaneous">
    <text evidence="4">Present with 238 molecules/cell in log phase SD medium.</text>
</comment>
<comment type="similarity">
    <text evidence="5">Belongs to the PEX28-32 family. PEX30/31 subfamily.</text>
</comment>
<reference key="1">
    <citation type="journal article" date="1997" name="Nature">
        <title>The nucleotide sequence of Saccharomyces cerevisiae chromosome VII.</title>
        <authorList>
            <person name="Tettelin H."/>
            <person name="Agostoni-Carbone M.L."/>
            <person name="Albermann K."/>
            <person name="Albers M."/>
            <person name="Arroyo J."/>
            <person name="Backes U."/>
            <person name="Barreiros T."/>
            <person name="Bertani I."/>
            <person name="Bjourson A.J."/>
            <person name="Brueckner M."/>
            <person name="Bruschi C.V."/>
            <person name="Carignani G."/>
            <person name="Castagnoli L."/>
            <person name="Cerdan E."/>
            <person name="Clemente M.L."/>
            <person name="Coblenz A."/>
            <person name="Coglievina M."/>
            <person name="Coissac E."/>
            <person name="Defoor E."/>
            <person name="Del Bino S."/>
            <person name="Delius H."/>
            <person name="Delneri D."/>
            <person name="de Wergifosse P."/>
            <person name="Dujon B."/>
            <person name="Durand P."/>
            <person name="Entian K.-D."/>
            <person name="Eraso P."/>
            <person name="Escribano V."/>
            <person name="Fabiani L."/>
            <person name="Fartmann B."/>
            <person name="Feroli F."/>
            <person name="Feuermann M."/>
            <person name="Frontali L."/>
            <person name="Garcia-Gonzalez M."/>
            <person name="Garcia-Saez M.I."/>
            <person name="Goffeau A."/>
            <person name="Guerreiro P."/>
            <person name="Hani J."/>
            <person name="Hansen M."/>
            <person name="Hebling U."/>
            <person name="Hernandez K."/>
            <person name="Heumann K."/>
            <person name="Hilger F."/>
            <person name="Hofmann B."/>
            <person name="Indge K.J."/>
            <person name="James C.M."/>
            <person name="Klima R."/>
            <person name="Koetter P."/>
            <person name="Kramer B."/>
            <person name="Kramer W."/>
            <person name="Lauquin G."/>
            <person name="Leuther H."/>
            <person name="Louis E.J."/>
            <person name="Maillier E."/>
            <person name="Marconi A."/>
            <person name="Martegani E."/>
            <person name="Mazon M.J."/>
            <person name="Mazzoni C."/>
            <person name="McReynolds A.D.K."/>
            <person name="Melchioretto P."/>
            <person name="Mewes H.-W."/>
            <person name="Minenkova O."/>
            <person name="Mueller-Auer S."/>
            <person name="Nawrocki A."/>
            <person name="Netter P."/>
            <person name="Neu R."/>
            <person name="Nombela C."/>
            <person name="Oliver S.G."/>
            <person name="Panzeri L."/>
            <person name="Paoluzi S."/>
            <person name="Plevani P."/>
            <person name="Portetelle D."/>
            <person name="Portillo F."/>
            <person name="Potier S."/>
            <person name="Purnelle B."/>
            <person name="Rieger M."/>
            <person name="Riles L."/>
            <person name="Rinaldi T."/>
            <person name="Robben J."/>
            <person name="Rodrigues-Pousada C."/>
            <person name="Rodriguez-Belmonte E."/>
            <person name="Rodriguez-Torres A.M."/>
            <person name="Rose M."/>
            <person name="Ruzzi M."/>
            <person name="Saliola M."/>
            <person name="Sanchez-Perez M."/>
            <person name="Schaefer B."/>
            <person name="Schaefer M."/>
            <person name="Scharfe M."/>
            <person name="Schmidheini T."/>
            <person name="Schreer A."/>
            <person name="Skala J."/>
            <person name="Souciet J.-L."/>
            <person name="Steensma H.Y."/>
            <person name="Talla E."/>
            <person name="Thierry A."/>
            <person name="Vandenbol M."/>
            <person name="van der Aart Q.J.M."/>
            <person name="Van Dyck L."/>
            <person name="Vanoni M."/>
            <person name="Verhasselt P."/>
            <person name="Voet M."/>
            <person name="Volckaert G."/>
            <person name="Wambutt R."/>
            <person name="Watson M.D."/>
            <person name="Weber N."/>
            <person name="Wedler E."/>
            <person name="Wedler H."/>
            <person name="Wipfli P."/>
            <person name="Wolf K."/>
            <person name="Wright L.F."/>
            <person name="Zaccaria P."/>
            <person name="Zimmermann M."/>
            <person name="Zollner A."/>
            <person name="Kleine K."/>
        </authorList>
    </citation>
    <scope>NUCLEOTIDE SEQUENCE [LARGE SCALE GENOMIC DNA]</scope>
    <source>
        <strain>ATCC 204508 / S288c</strain>
    </source>
</reference>
<reference key="2">
    <citation type="journal article" date="2014" name="G3 (Bethesda)">
        <title>The reference genome sequence of Saccharomyces cerevisiae: Then and now.</title>
        <authorList>
            <person name="Engel S.R."/>
            <person name="Dietrich F.S."/>
            <person name="Fisk D.G."/>
            <person name="Binkley G."/>
            <person name="Balakrishnan R."/>
            <person name="Costanzo M.C."/>
            <person name="Dwight S.S."/>
            <person name="Hitz B.C."/>
            <person name="Karra K."/>
            <person name="Nash R.S."/>
            <person name="Weng S."/>
            <person name="Wong E.D."/>
            <person name="Lloyd P."/>
            <person name="Skrzypek M.S."/>
            <person name="Miyasato S.R."/>
            <person name="Simison M."/>
            <person name="Cherry J.M."/>
        </authorList>
    </citation>
    <scope>GENOME REANNOTATION</scope>
    <source>
        <strain>ATCC 204508 / S288c</strain>
    </source>
</reference>
<reference key="3">
    <citation type="journal article" date="2003" name="Nature">
        <title>Global analysis of protein localization in budding yeast.</title>
        <authorList>
            <person name="Huh W.-K."/>
            <person name="Falvo J.V."/>
            <person name="Gerke L.C."/>
            <person name="Carroll A.S."/>
            <person name="Howson R.W."/>
            <person name="Weissman J.S."/>
            <person name="O'Shea E.K."/>
        </authorList>
    </citation>
    <scope>SUBCELLULAR LOCATION [LARGE SCALE ANALYSIS]</scope>
</reference>
<reference key="4">
    <citation type="journal article" date="2003" name="Nature">
        <title>Global analysis of protein expression in yeast.</title>
        <authorList>
            <person name="Ghaemmaghami S."/>
            <person name="Huh W.-K."/>
            <person name="Bower K."/>
            <person name="Howson R.W."/>
            <person name="Belle A."/>
            <person name="Dephoure N."/>
            <person name="O'Shea E.K."/>
            <person name="Weissman J.S."/>
        </authorList>
    </citation>
    <scope>LEVEL OF PROTEIN EXPRESSION [LARGE SCALE ANALYSIS]</scope>
</reference>
<reference key="5">
    <citation type="journal article" date="2006" name="Proc. Natl. Acad. Sci. U.S.A.">
        <title>A global topology map of the Saccharomyces cerevisiae membrane proteome.</title>
        <authorList>
            <person name="Kim H."/>
            <person name="Melen K."/>
            <person name="Oesterberg M."/>
            <person name="von Heijne G."/>
        </authorList>
    </citation>
    <scope>TOPOLOGY [LARGE SCALE ANALYSIS]</scope>
    <source>
        <strain>ATCC 208353 / W303-1A</strain>
    </source>
</reference>
<reference key="6">
    <citation type="journal article" date="2007" name="J. Proteome Res.">
        <title>Large-scale phosphorylation analysis of alpha-factor-arrested Saccharomyces cerevisiae.</title>
        <authorList>
            <person name="Li X."/>
            <person name="Gerber S.A."/>
            <person name="Rudner A.D."/>
            <person name="Beausoleil S.A."/>
            <person name="Haas W."/>
            <person name="Villen J."/>
            <person name="Elias J.E."/>
            <person name="Gygi S.P."/>
        </authorList>
    </citation>
    <scope>PHOSPHORYLATION [LARGE SCALE ANALYSIS] AT SER-432</scope>
    <scope>IDENTIFICATION BY MASS SPECTROMETRY [LARGE SCALE ANALYSIS]</scope>
    <source>
        <strain>ADR376</strain>
    </source>
</reference>
<reference key="7">
    <citation type="journal article" date="2007" name="Proc. Natl. Acad. Sci. U.S.A.">
        <title>Analysis of phosphorylation sites on proteins from Saccharomyces cerevisiae by electron transfer dissociation (ETD) mass spectrometry.</title>
        <authorList>
            <person name="Chi A."/>
            <person name="Huttenhower C."/>
            <person name="Geer L.Y."/>
            <person name="Coon J.J."/>
            <person name="Syka J.E.P."/>
            <person name="Bai D.L."/>
            <person name="Shabanowitz J."/>
            <person name="Burke D.J."/>
            <person name="Troyanskaya O.G."/>
            <person name="Hunt D.F."/>
        </authorList>
    </citation>
    <scope>PHOSPHORYLATION [LARGE SCALE ANALYSIS] AT SER-432</scope>
    <scope>IDENTIFICATION BY MASS SPECTROMETRY [LARGE SCALE ANALYSIS]</scope>
</reference>
<reference key="8">
    <citation type="journal article" date="2009" name="Science">
        <title>Global analysis of Cdk1 substrate phosphorylation sites provides insights into evolution.</title>
        <authorList>
            <person name="Holt L.J."/>
            <person name="Tuch B.B."/>
            <person name="Villen J."/>
            <person name="Johnson A.D."/>
            <person name="Gygi S.P."/>
            <person name="Morgan D.O."/>
        </authorList>
    </citation>
    <scope>PHOSPHORYLATION [LARGE SCALE ANALYSIS] AT SER-432 AND THR-435</scope>
    <scope>IDENTIFICATION BY MASS SPECTROMETRY [LARGE SCALE ANALYSIS]</scope>
</reference>
<proteinExistence type="evidence at protein level"/>
<accession>P53203</accession>
<accession>D6VUE1</accession>